<protein>
    <recommendedName>
        <fullName evidence="2">Small ribosomal subunit protein uS7cz/uS7cy</fullName>
    </recommendedName>
    <alternativeName>
        <fullName>30S ribosomal protein S7, chloroplastic</fullName>
    </alternativeName>
</protein>
<gene>
    <name type="primary">rps7-A</name>
</gene>
<gene>
    <name type="primary">rps7-B</name>
</gene>
<organism>
    <name type="scientific">Lotus japonicus</name>
    <name type="common">Lotus corniculatus var. japonicus</name>
    <dbReference type="NCBI Taxonomy" id="34305"/>
    <lineage>
        <taxon>Eukaryota</taxon>
        <taxon>Viridiplantae</taxon>
        <taxon>Streptophyta</taxon>
        <taxon>Embryophyta</taxon>
        <taxon>Tracheophyta</taxon>
        <taxon>Spermatophyta</taxon>
        <taxon>Magnoliopsida</taxon>
        <taxon>eudicotyledons</taxon>
        <taxon>Gunneridae</taxon>
        <taxon>Pentapetalae</taxon>
        <taxon>rosids</taxon>
        <taxon>fabids</taxon>
        <taxon>Fabales</taxon>
        <taxon>Fabaceae</taxon>
        <taxon>Papilionoideae</taxon>
        <taxon>50 kb inversion clade</taxon>
        <taxon>NPAAA clade</taxon>
        <taxon>Hologalegina</taxon>
        <taxon>robinioid clade</taxon>
        <taxon>Loteae</taxon>
        <taxon>Lotus</taxon>
    </lineage>
</organism>
<sequence length="155" mass="17374">MSRRGTAEKKTAKSDPIYRNRLVNMLVNRILKHGKKSLAYQIIYRAMKKIQQKTETNPLSVLRQAIRGVTPDIAVKARRVGGSTHQVPIEIGSTQGKALAIRWLLGASRKRPGRNMAFKLSSELVDAAKGSGDAIRKKEETHRMAEANRAFAHFR</sequence>
<geneLocation type="chloroplast"/>
<dbReference type="EMBL" id="AP002983">
    <property type="protein sequence ID" value="BAB33254.1"/>
    <property type="molecule type" value="Genomic_DNA"/>
</dbReference>
<dbReference type="EMBL" id="AP002983">
    <property type="protein sequence ID" value="BAB33240.1"/>
    <property type="molecule type" value="Genomic_DNA"/>
</dbReference>
<dbReference type="SMR" id="Q9B1A1"/>
<dbReference type="ProMEX" id="Q9B1A1"/>
<dbReference type="GO" id="GO:0009507">
    <property type="term" value="C:chloroplast"/>
    <property type="evidence" value="ECO:0007669"/>
    <property type="project" value="UniProtKB-SubCell"/>
</dbReference>
<dbReference type="GO" id="GO:0015935">
    <property type="term" value="C:small ribosomal subunit"/>
    <property type="evidence" value="ECO:0007669"/>
    <property type="project" value="InterPro"/>
</dbReference>
<dbReference type="GO" id="GO:0019843">
    <property type="term" value="F:rRNA binding"/>
    <property type="evidence" value="ECO:0007669"/>
    <property type="project" value="UniProtKB-UniRule"/>
</dbReference>
<dbReference type="GO" id="GO:0003735">
    <property type="term" value="F:structural constituent of ribosome"/>
    <property type="evidence" value="ECO:0007669"/>
    <property type="project" value="InterPro"/>
</dbReference>
<dbReference type="GO" id="GO:0006412">
    <property type="term" value="P:translation"/>
    <property type="evidence" value="ECO:0007669"/>
    <property type="project" value="UniProtKB-UniRule"/>
</dbReference>
<dbReference type="CDD" id="cd14871">
    <property type="entry name" value="uS7_Chloroplast"/>
    <property type="match status" value="1"/>
</dbReference>
<dbReference type="FunFam" id="1.10.455.10:FF:000001">
    <property type="entry name" value="30S ribosomal protein S7"/>
    <property type="match status" value="1"/>
</dbReference>
<dbReference type="Gene3D" id="1.10.455.10">
    <property type="entry name" value="Ribosomal protein S7 domain"/>
    <property type="match status" value="1"/>
</dbReference>
<dbReference type="HAMAP" id="MF_00480_B">
    <property type="entry name" value="Ribosomal_uS7_B"/>
    <property type="match status" value="1"/>
</dbReference>
<dbReference type="InterPro" id="IPR000235">
    <property type="entry name" value="Ribosomal_uS7"/>
</dbReference>
<dbReference type="InterPro" id="IPR005717">
    <property type="entry name" value="Ribosomal_uS7_bac/org-type"/>
</dbReference>
<dbReference type="InterPro" id="IPR020606">
    <property type="entry name" value="Ribosomal_uS7_CS"/>
</dbReference>
<dbReference type="InterPro" id="IPR023798">
    <property type="entry name" value="Ribosomal_uS7_dom"/>
</dbReference>
<dbReference type="InterPro" id="IPR036823">
    <property type="entry name" value="Ribosomal_uS7_dom_sf"/>
</dbReference>
<dbReference type="NCBIfam" id="TIGR01029">
    <property type="entry name" value="rpsG_bact"/>
    <property type="match status" value="1"/>
</dbReference>
<dbReference type="PANTHER" id="PTHR11205">
    <property type="entry name" value="RIBOSOMAL PROTEIN S7"/>
    <property type="match status" value="1"/>
</dbReference>
<dbReference type="Pfam" id="PF00177">
    <property type="entry name" value="Ribosomal_S7"/>
    <property type="match status" value="1"/>
</dbReference>
<dbReference type="PIRSF" id="PIRSF002122">
    <property type="entry name" value="RPS7p_RPS7a_RPS5e_RPS7o"/>
    <property type="match status" value="1"/>
</dbReference>
<dbReference type="SUPFAM" id="SSF47973">
    <property type="entry name" value="Ribosomal protein S7"/>
    <property type="match status" value="1"/>
</dbReference>
<dbReference type="PROSITE" id="PS00052">
    <property type="entry name" value="RIBOSOMAL_S7"/>
    <property type="match status" value="1"/>
</dbReference>
<accession>Q9B1A1</accession>
<name>RR7_LOTJA</name>
<proteinExistence type="inferred from homology"/>
<reference key="1">
    <citation type="journal article" date="2000" name="DNA Res.">
        <title>Complete structure of the chloroplast genome of a legume, Lotus japonicus.</title>
        <authorList>
            <person name="Kato T."/>
            <person name="Kaneko T."/>
            <person name="Sato S."/>
            <person name="Nakamura Y."/>
            <person name="Tabata S."/>
        </authorList>
    </citation>
    <scope>NUCLEOTIDE SEQUENCE [LARGE SCALE GENOMIC DNA]</scope>
    <source>
        <strain>cv. Miyakojima MG-20</strain>
    </source>
</reference>
<feature type="chain" id="PRO_0000124469" description="Small ribosomal subunit protein uS7cz/uS7cy">
    <location>
        <begin position="1"/>
        <end position="155"/>
    </location>
</feature>
<evidence type="ECO:0000250" key="1"/>
<evidence type="ECO:0000255" key="2">
    <source>
        <dbReference type="HAMAP-Rule" id="MF_00480"/>
    </source>
</evidence>
<evidence type="ECO:0000305" key="3"/>
<keyword id="KW-0150">Chloroplast</keyword>
<keyword id="KW-0934">Plastid</keyword>
<keyword id="KW-0687">Ribonucleoprotein</keyword>
<keyword id="KW-0689">Ribosomal protein</keyword>
<keyword id="KW-0694">RNA-binding</keyword>
<keyword id="KW-0699">rRNA-binding</keyword>
<comment type="function">
    <text evidence="1">One of the primary rRNA binding proteins, it binds directly to 16S rRNA where it nucleates assembly of the head domain of the 30S subunit.</text>
</comment>
<comment type="subunit">
    <text>Part of the 30S ribosomal subunit.</text>
</comment>
<comment type="subcellular location">
    <subcellularLocation>
        <location>Plastid</location>
        <location>Chloroplast</location>
    </subcellularLocation>
</comment>
<comment type="similarity">
    <text evidence="3">Belongs to the universal ribosomal protein uS7 family.</text>
</comment>